<name>UFC1_RAT</name>
<reference key="1">
    <citation type="submission" date="2004-07" db="EMBL/GenBank/DDBJ databases">
        <title>Postsynaptic distribution of Ufc1 protein.</title>
        <authorList>
            <person name="Tazawa S."/>
            <person name="Zhang J."/>
            <person name="Tian Q."/>
            <person name="Saitoh F."/>
            <person name="Suzuki T."/>
        </authorList>
    </citation>
    <scope>NUCLEOTIDE SEQUENCE [MRNA]</scope>
</reference>
<reference key="2">
    <citation type="journal article" date="2004" name="Genome Res.">
        <title>The status, quality, and expansion of the NIH full-length cDNA project: the Mammalian Gene Collection (MGC).</title>
        <authorList>
            <consortium name="The MGC Project Team"/>
        </authorList>
    </citation>
    <scope>NUCLEOTIDE SEQUENCE [LARGE SCALE MRNA]</scope>
    <source>
        <tissue>Ovary</tissue>
    </source>
</reference>
<sequence length="167" mass="19492">MADEATRRVVSEIPVLKTNAGPRDRELWVQRLKEEYQSLIRYVENNKNADNDWFRLESNKEGTRWFGKCWYIHDFLKYEFDIEFEIPITYPTTAPEIAVPELDGKTAKMYRGGKICLTDHFKPLWARNVPKFGLAHLMALGLGPWLAVEVPDLIQKGVIQHKEKCNQ</sequence>
<accession>Q6BBI8</accession>
<proteinExistence type="evidence at transcript level"/>
<feature type="chain" id="PRO_0000082615" description="Ubiquitin-fold modifier-conjugating enzyme 1">
    <location>
        <begin position="1"/>
        <end position="167"/>
    </location>
</feature>
<feature type="active site" description="Glycyl thioester intermediate" evidence="1">
    <location>
        <position position="116"/>
    </location>
</feature>
<feature type="cross-link" description="Glycyl lysine isopeptide (Lys-Gly) (interchain with G-Cter in UFM1)" evidence="1">
    <location>
        <position position="122"/>
    </location>
</feature>
<organism>
    <name type="scientific">Rattus norvegicus</name>
    <name type="common">Rat</name>
    <dbReference type="NCBI Taxonomy" id="10116"/>
    <lineage>
        <taxon>Eukaryota</taxon>
        <taxon>Metazoa</taxon>
        <taxon>Chordata</taxon>
        <taxon>Craniata</taxon>
        <taxon>Vertebrata</taxon>
        <taxon>Euteleostomi</taxon>
        <taxon>Mammalia</taxon>
        <taxon>Eutheria</taxon>
        <taxon>Euarchontoglires</taxon>
        <taxon>Glires</taxon>
        <taxon>Rodentia</taxon>
        <taxon>Myomorpha</taxon>
        <taxon>Muroidea</taxon>
        <taxon>Muridae</taxon>
        <taxon>Murinae</taxon>
        <taxon>Rattus</taxon>
    </lineage>
</organism>
<evidence type="ECO:0000250" key="1">
    <source>
        <dbReference type="UniProtKB" id="Q9Y3C8"/>
    </source>
</evidence>
<evidence type="ECO:0000305" key="2"/>
<evidence type="ECO:0000312" key="3">
    <source>
        <dbReference type="RGD" id="1303313"/>
    </source>
</evidence>
<gene>
    <name evidence="3" type="primary">Ufc1</name>
</gene>
<protein>
    <recommendedName>
        <fullName evidence="2">Ubiquitin-fold modifier-conjugating enzyme 1</fullName>
        <shortName evidence="1">Ufm1-conjugating enzyme 1</shortName>
    </recommendedName>
</protein>
<comment type="function">
    <text evidence="1">E2-like enzyme which specifically catalyzes the second step in ufmylation. Accepts the ubiquitin-like modifier UFM1 from the E1 enzyme UBA5 and forms an intermediate with UFM1 via a thioester linkage. Ufmylation is involved in various processes, such as ribosome recycling, response to DNA damage, interferon response or reticulophagy (also called ER-phagy).</text>
</comment>
<comment type="subunit">
    <text evidence="1">Interacts with UBA5 (via C-terminus). Interacts with UFL1. Interacts with UFM1. Interacts with KIRREL3.</text>
</comment>
<comment type="domain">
    <text evidence="1">In absence of UBA5, the active site is solvated by water molecules thereby reducing its nucleophilic activity. A linker region of UBA5 is required to reduce the amount of water molecules in the vicinity of the active site and elevate its nucleophilic activity.</text>
</comment>
<comment type="PTM">
    <text evidence="1">Ufmylated at Lys-122. Deufmylated by UFSP1.</text>
</comment>
<comment type="similarity">
    <text evidence="2">Belongs to the ubiquitin-conjugating enzyme family. UFC1 subfamily.</text>
</comment>
<dbReference type="EMBL" id="AB186051">
    <property type="protein sequence ID" value="BAD34943.1"/>
    <property type="molecule type" value="mRNA"/>
</dbReference>
<dbReference type="EMBL" id="BC087648">
    <property type="protein sequence ID" value="AAH87648.1"/>
    <property type="molecule type" value="mRNA"/>
</dbReference>
<dbReference type="RefSeq" id="NP_001003709.1">
    <property type="nucleotide sequence ID" value="NM_001003709.3"/>
</dbReference>
<dbReference type="RefSeq" id="NP_001416864.1">
    <property type="nucleotide sequence ID" value="NM_001429935.1"/>
</dbReference>
<dbReference type="RefSeq" id="NP_001416865.1">
    <property type="nucleotide sequence ID" value="NM_001429936.1"/>
</dbReference>
<dbReference type="RefSeq" id="XP_006250313.1">
    <property type="nucleotide sequence ID" value="XM_006250251.2"/>
</dbReference>
<dbReference type="RefSeq" id="XP_038946888.1">
    <property type="nucleotide sequence ID" value="XM_039090960.2"/>
</dbReference>
<dbReference type="BMRB" id="Q6BBI8"/>
<dbReference type="SMR" id="Q6BBI8"/>
<dbReference type="FunCoup" id="Q6BBI8">
    <property type="interactions" value="2476"/>
</dbReference>
<dbReference type="STRING" id="10116.ENSRNOP00000004938"/>
<dbReference type="iPTMnet" id="Q6BBI8"/>
<dbReference type="PhosphoSitePlus" id="Q6BBI8"/>
<dbReference type="SwissPalm" id="Q6BBI8"/>
<dbReference type="jPOST" id="Q6BBI8"/>
<dbReference type="PaxDb" id="10116-ENSRNOP00000004938"/>
<dbReference type="Ensembl" id="ENSRNOT00000004938.6">
    <property type="protein sequence ID" value="ENSRNOP00000004938.3"/>
    <property type="gene ID" value="ENSRNOG00000003706.6"/>
</dbReference>
<dbReference type="GeneID" id="445268"/>
<dbReference type="KEGG" id="rno:445268"/>
<dbReference type="UCSC" id="RGD:1303313">
    <property type="organism name" value="rat"/>
</dbReference>
<dbReference type="AGR" id="RGD:1303313"/>
<dbReference type="CTD" id="51506"/>
<dbReference type="RGD" id="1303313">
    <property type="gene designation" value="Ufc1"/>
</dbReference>
<dbReference type="eggNOG" id="KOG3357">
    <property type="taxonomic scope" value="Eukaryota"/>
</dbReference>
<dbReference type="GeneTree" id="ENSGT00390000008196"/>
<dbReference type="HOGENOM" id="CLU_101170_0_0_1"/>
<dbReference type="InParanoid" id="Q6BBI8"/>
<dbReference type="OMA" id="LWQKNVP"/>
<dbReference type="OrthoDB" id="10256182at2759"/>
<dbReference type="PhylomeDB" id="Q6BBI8"/>
<dbReference type="TreeFam" id="TF313587"/>
<dbReference type="PRO" id="PR:Q6BBI8"/>
<dbReference type="Proteomes" id="UP000002494">
    <property type="component" value="Chromosome 13"/>
</dbReference>
<dbReference type="Bgee" id="ENSRNOG00000003706">
    <property type="expression patterns" value="Expressed in pancreas and 20 other cell types or tissues"/>
</dbReference>
<dbReference type="GO" id="GO:0061657">
    <property type="term" value="F:UFM1 conjugating enzyme activity"/>
    <property type="evidence" value="ECO:0000250"/>
    <property type="project" value="UniProtKB"/>
</dbReference>
<dbReference type="GO" id="GO:0071568">
    <property type="term" value="F:UFM1 transferase activity"/>
    <property type="evidence" value="ECO:0000318"/>
    <property type="project" value="GO_Central"/>
</dbReference>
<dbReference type="GO" id="GO:0007420">
    <property type="term" value="P:brain development"/>
    <property type="evidence" value="ECO:0000250"/>
    <property type="project" value="UniProtKB"/>
</dbReference>
<dbReference type="GO" id="GO:1990592">
    <property type="term" value="P:protein K69-linked ufmylation"/>
    <property type="evidence" value="ECO:0000250"/>
    <property type="project" value="UniProtKB"/>
</dbReference>
<dbReference type="GO" id="GO:0071569">
    <property type="term" value="P:protein ufmylation"/>
    <property type="evidence" value="ECO:0000250"/>
    <property type="project" value="UniProtKB"/>
</dbReference>
<dbReference type="GO" id="GO:0032649">
    <property type="term" value="P:regulation of type II interferon production"/>
    <property type="evidence" value="ECO:0000250"/>
    <property type="project" value="UniProtKB"/>
</dbReference>
<dbReference type="GO" id="GO:0034976">
    <property type="term" value="P:response to endoplasmic reticulum stress"/>
    <property type="evidence" value="ECO:0000250"/>
    <property type="project" value="UniProtKB"/>
</dbReference>
<dbReference type="GO" id="GO:0061709">
    <property type="term" value="P:reticulophagy"/>
    <property type="evidence" value="ECO:0000250"/>
    <property type="project" value="UniProtKB"/>
</dbReference>
<dbReference type="CDD" id="cd11686">
    <property type="entry name" value="UBCc_UFC1"/>
    <property type="match status" value="1"/>
</dbReference>
<dbReference type="FunFam" id="3.10.110.10:FF:000042">
    <property type="entry name" value="Ubiquitin-fold modifier-conjugating enzyme 1"/>
    <property type="match status" value="1"/>
</dbReference>
<dbReference type="Gene3D" id="3.10.110.10">
    <property type="entry name" value="Ubiquitin Conjugating Enzyme"/>
    <property type="match status" value="1"/>
</dbReference>
<dbReference type="InterPro" id="IPR016135">
    <property type="entry name" value="UBQ-conjugating_enzyme/RWD"/>
</dbReference>
<dbReference type="InterPro" id="IPR014806">
    <property type="entry name" value="Ufc1"/>
</dbReference>
<dbReference type="PANTHER" id="PTHR12921">
    <property type="entry name" value="UBIQUITIN-FOLD MODIFIER-CONJUGATING ENZYME 1"/>
    <property type="match status" value="1"/>
</dbReference>
<dbReference type="PANTHER" id="PTHR12921:SF0">
    <property type="entry name" value="UBIQUITIN-FOLD MODIFIER-CONJUGATING ENZYME 1"/>
    <property type="match status" value="1"/>
</dbReference>
<dbReference type="Pfam" id="PF08694">
    <property type="entry name" value="UFC1"/>
    <property type="match status" value="1"/>
</dbReference>
<dbReference type="PIRSF" id="PIRSF008716">
    <property type="entry name" value="DUF1782"/>
    <property type="match status" value="1"/>
</dbReference>
<dbReference type="SUPFAM" id="SSF54495">
    <property type="entry name" value="UBC-like"/>
    <property type="match status" value="1"/>
</dbReference>
<keyword id="KW-1017">Isopeptide bond</keyword>
<keyword id="KW-1185">Reference proteome</keyword>
<keyword id="KW-0832">Ubl conjugation</keyword>
<keyword id="KW-0833">Ubl conjugation pathway</keyword>